<evidence type="ECO:0000250" key="1">
    <source>
        <dbReference type="UniProtKB" id="Q86WR6"/>
    </source>
</evidence>
<evidence type="ECO:0000256" key="2">
    <source>
        <dbReference type="SAM" id="MobiDB-lite"/>
    </source>
</evidence>
<evidence type="ECO:0000269" key="3">
    <source>
    </source>
</evidence>
<evidence type="ECO:0000269" key="4">
    <source>
    </source>
</evidence>
<evidence type="ECO:0000303" key="5">
    <source>
    </source>
</evidence>
<evidence type="ECO:0000305" key="6"/>
<organism>
    <name type="scientific">Mus musculus</name>
    <name type="common">Mouse</name>
    <dbReference type="NCBI Taxonomy" id="10090"/>
    <lineage>
        <taxon>Eukaryota</taxon>
        <taxon>Metazoa</taxon>
        <taxon>Chordata</taxon>
        <taxon>Craniata</taxon>
        <taxon>Vertebrata</taxon>
        <taxon>Euteleostomi</taxon>
        <taxon>Mammalia</taxon>
        <taxon>Eutheria</taxon>
        <taxon>Euarchontoglires</taxon>
        <taxon>Glires</taxon>
        <taxon>Rodentia</taxon>
        <taxon>Myomorpha</taxon>
        <taxon>Muroidea</taxon>
        <taxon>Muridae</taxon>
        <taxon>Murinae</taxon>
        <taxon>Mus</taxon>
        <taxon>Mus</taxon>
    </lineage>
</organism>
<sequence>MEASDWQGGEGDKPLEKVGSVPCLERSSSTVPTGDALVRHAKGLSQDTFKICKEYLRPLKKFLRKLNLPKDLPQKKRIKYTKQSLEALGGHINTFLQHYCRAWEIKHWKKMLWRFVSLFSELEAKQLRRLYKYTKTNQTAKFLAALCPLDAPERSLLANQEDCLPRLCSAWGLHGNISGMKERLSKMQAPGQEVVMLEEPRSSHCSRGDSLRKLPQKPKLKKKRIKERLESPKSCS</sequence>
<comment type="function">
    <text evidence="4">May play a role in regulation of apoptosis.</text>
</comment>
<comment type="subcellular location">
    <subcellularLocation>
        <location evidence="4">Cytoplasm</location>
    </subcellularLocation>
    <subcellularLocation>
        <location evidence="1">Nucleus</location>
    </subcellularLocation>
    <text evidence="4">Located in the cytoplasm of spermatogonia and spermatocytes.</text>
</comment>
<comment type="alternative products">
    <event type="alternative splicing"/>
    <isoform>
        <id>Q9D979-1</id>
        <name>1</name>
        <sequence type="displayed"/>
    </isoform>
    <isoform>
        <id>Q9D979-2</id>
        <name>2</name>
        <sequence type="described" ref="VSP_039026"/>
    </isoform>
</comment>
<comment type="tissue specificity">
    <text evidence="4">Exclusively expressed in testes.</text>
</comment>
<comment type="domain">
    <text evidence="3">The CHD1 helical C-terminal domain (CHCT) may bind DNA and nucleosomes.</text>
</comment>
<comment type="sequence caution" evidence="6">
    <conflict type="erroneous initiation">
        <sequence resource="EMBL-CDS" id="AAH48674"/>
    </conflict>
    <text>Truncated N-terminus.</text>
</comment>
<accession>Q9D979</accession>
<accession>Q5SX10</accession>
<accession>Q80ZN8</accession>
<proteinExistence type="evidence at protein level"/>
<reference key="1">
    <citation type="journal article" date="2005" name="Science">
        <title>The transcriptional landscape of the mammalian genome.</title>
        <authorList>
            <person name="Carninci P."/>
            <person name="Kasukawa T."/>
            <person name="Katayama S."/>
            <person name="Gough J."/>
            <person name="Frith M.C."/>
            <person name="Maeda N."/>
            <person name="Oyama R."/>
            <person name="Ravasi T."/>
            <person name="Lenhard B."/>
            <person name="Wells C."/>
            <person name="Kodzius R."/>
            <person name="Shimokawa K."/>
            <person name="Bajic V.B."/>
            <person name="Brenner S.E."/>
            <person name="Batalov S."/>
            <person name="Forrest A.R."/>
            <person name="Zavolan M."/>
            <person name="Davis M.J."/>
            <person name="Wilming L.G."/>
            <person name="Aidinis V."/>
            <person name="Allen J.E."/>
            <person name="Ambesi-Impiombato A."/>
            <person name="Apweiler R."/>
            <person name="Aturaliya R.N."/>
            <person name="Bailey T.L."/>
            <person name="Bansal M."/>
            <person name="Baxter L."/>
            <person name="Beisel K.W."/>
            <person name="Bersano T."/>
            <person name="Bono H."/>
            <person name="Chalk A.M."/>
            <person name="Chiu K.P."/>
            <person name="Choudhary V."/>
            <person name="Christoffels A."/>
            <person name="Clutterbuck D.R."/>
            <person name="Crowe M.L."/>
            <person name="Dalla E."/>
            <person name="Dalrymple B.P."/>
            <person name="de Bono B."/>
            <person name="Della Gatta G."/>
            <person name="di Bernardo D."/>
            <person name="Down T."/>
            <person name="Engstrom P."/>
            <person name="Fagiolini M."/>
            <person name="Faulkner G."/>
            <person name="Fletcher C.F."/>
            <person name="Fukushima T."/>
            <person name="Furuno M."/>
            <person name="Futaki S."/>
            <person name="Gariboldi M."/>
            <person name="Georgii-Hemming P."/>
            <person name="Gingeras T.R."/>
            <person name="Gojobori T."/>
            <person name="Green R.E."/>
            <person name="Gustincich S."/>
            <person name="Harbers M."/>
            <person name="Hayashi Y."/>
            <person name="Hensch T.K."/>
            <person name="Hirokawa N."/>
            <person name="Hill D."/>
            <person name="Huminiecki L."/>
            <person name="Iacono M."/>
            <person name="Ikeo K."/>
            <person name="Iwama A."/>
            <person name="Ishikawa T."/>
            <person name="Jakt M."/>
            <person name="Kanapin A."/>
            <person name="Katoh M."/>
            <person name="Kawasawa Y."/>
            <person name="Kelso J."/>
            <person name="Kitamura H."/>
            <person name="Kitano H."/>
            <person name="Kollias G."/>
            <person name="Krishnan S.P."/>
            <person name="Kruger A."/>
            <person name="Kummerfeld S.K."/>
            <person name="Kurochkin I.V."/>
            <person name="Lareau L.F."/>
            <person name="Lazarevic D."/>
            <person name="Lipovich L."/>
            <person name="Liu J."/>
            <person name="Liuni S."/>
            <person name="McWilliam S."/>
            <person name="Madan Babu M."/>
            <person name="Madera M."/>
            <person name="Marchionni L."/>
            <person name="Matsuda H."/>
            <person name="Matsuzawa S."/>
            <person name="Miki H."/>
            <person name="Mignone F."/>
            <person name="Miyake S."/>
            <person name="Morris K."/>
            <person name="Mottagui-Tabar S."/>
            <person name="Mulder N."/>
            <person name="Nakano N."/>
            <person name="Nakauchi H."/>
            <person name="Ng P."/>
            <person name="Nilsson R."/>
            <person name="Nishiguchi S."/>
            <person name="Nishikawa S."/>
            <person name="Nori F."/>
            <person name="Ohara O."/>
            <person name="Okazaki Y."/>
            <person name="Orlando V."/>
            <person name="Pang K.C."/>
            <person name="Pavan W.J."/>
            <person name="Pavesi G."/>
            <person name="Pesole G."/>
            <person name="Petrovsky N."/>
            <person name="Piazza S."/>
            <person name="Reed J."/>
            <person name="Reid J.F."/>
            <person name="Ring B.Z."/>
            <person name="Ringwald M."/>
            <person name="Rost B."/>
            <person name="Ruan Y."/>
            <person name="Salzberg S.L."/>
            <person name="Sandelin A."/>
            <person name="Schneider C."/>
            <person name="Schoenbach C."/>
            <person name="Sekiguchi K."/>
            <person name="Semple C.A."/>
            <person name="Seno S."/>
            <person name="Sessa L."/>
            <person name="Sheng Y."/>
            <person name="Shibata Y."/>
            <person name="Shimada H."/>
            <person name="Shimada K."/>
            <person name="Silva D."/>
            <person name="Sinclair B."/>
            <person name="Sperling S."/>
            <person name="Stupka E."/>
            <person name="Sugiura K."/>
            <person name="Sultana R."/>
            <person name="Takenaka Y."/>
            <person name="Taki K."/>
            <person name="Tammoja K."/>
            <person name="Tan S.L."/>
            <person name="Tang S."/>
            <person name="Taylor M.S."/>
            <person name="Tegner J."/>
            <person name="Teichmann S.A."/>
            <person name="Ueda H.R."/>
            <person name="van Nimwegen E."/>
            <person name="Verardo R."/>
            <person name="Wei C.L."/>
            <person name="Yagi K."/>
            <person name="Yamanishi H."/>
            <person name="Zabarovsky E."/>
            <person name="Zhu S."/>
            <person name="Zimmer A."/>
            <person name="Hide W."/>
            <person name="Bult C."/>
            <person name="Grimmond S.M."/>
            <person name="Teasdale R.D."/>
            <person name="Liu E.T."/>
            <person name="Brusic V."/>
            <person name="Quackenbush J."/>
            <person name="Wahlestedt C."/>
            <person name="Mattick J.S."/>
            <person name="Hume D.A."/>
            <person name="Kai C."/>
            <person name="Sasaki D."/>
            <person name="Tomaru Y."/>
            <person name="Fukuda S."/>
            <person name="Kanamori-Katayama M."/>
            <person name="Suzuki M."/>
            <person name="Aoki J."/>
            <person name="Arakawa T."/>
            <person name="Iida J."/>
            <person name="Imamura K."/>
            <person name="Itoh M."/>
            <person name="Kato T."/>
            <person name="Kawaji H."/>
            <person name="Kawagashira N."/>
            <person name="Kawashima T."/>
            <person name="Kojima M."/>
            <person name="Kondo S."/>
            <person name="Konno H."/>
            <person name="Nakano K."/>
            <person name="Ninomiya N."/>
            <person name="Nishio T."/>
            <person name="Okada M."/>
            <person name="Plessy C."/>
            <person name="Shibata K."/>
            <person name="Shiraki T."/>
            <person name="Suzuki S."/>
            <person name="Tagami M."/>
            <person name="Waki K."/>
            <person name="Watahiki A."/>
            <person name="Okamura-Oho Y."/>
            <person name="Suzuki H."/>
            <person name="Kawai J."/>
            <person name="Hayashizaki Y."/>
        </authorList>
    </citation>
    <scope>NUCLEOTIDE SEQUENCE [LARGE SCALE MRNA] (ISOFORM 2)</scope>
    <source>
        <strain>C57BL/6J</strain>
        <tissue>Testis</tissue>
    </source>
</reference>
<reference key="2">
    <citation type="journal article" date="2009" name="PLoS Biol.">
        <title>Lineage-specific biology revealed by a finished genome assembly of the mouse.</title>
        <authorList>
            <person name="Church D.M."/>
            <person name="Goodstadt L."/>
            <person name="Hillier L.W."/>
            <person name="Zody M.C."/>
            <person name="Goldstein S."/>
            <person name="She X."/>
            <person name="Bult C.J."/>
            <person name="Agarwala R."/>
            <person name="Cherry J.L."/>
            <person name="DiCuccio M."/>
            <person name="Hlavina W."/>
            <person name="Kapustin Y."/>
            <person name="Meric P."/>
            <person name="Maglott D."/>
            <person name="Birtle Z."/>
            <person name="Marques A.C."/>
            <person name="Graves T."/>
            <person name="Zhou S."/>
            <person name="Teague B."/>
            <person name="Potamousis K."/>
            <person name="Churas C."/>
            <person name="Place M."/>
            <person name="Herschleb J."/>
            <person name="Runnheim R."/>
            <person name="Forrest D."/>
            <person name="Amos-Landgraf J."/>
            <person name="Schwartz D.C."/>
            <person name="Cheng Z."/>
            <person name="Lindblad-Toh K."/>
            <person name="Eichler E.E."/>
            <person name="Ponting C.P."/>
        </authorList>
    </citation>
    <scope>NUCLEOTIDE SEQUENCE [LARGE SCALE GENOMIC DNA]</scope>
    <source>
        <strain>C57BL/6J</strain>
    </source>
</reference>
<reference key="3">
    <citation type="journal article" date="2004" name="Genome Res.">
        <title>The status, quality, and expansion of the NIH full-length cDNA project: the Mammalian Gene Collection (MGC).</title>
        <authorList>
            <consortium name="The MGC Project Team"/>
        </authorList>
    </citation>
    <scope>NUCLEOTIDE SEQUENCE [LARGE SCALE MRNA] (ISOFORM 1)</scope>
    <source>
        <tissue>Testis</tissue>
    </source>
</reference>
<reference key="4">
    <citation type="journal article" date="2016" name="J. Mol. Biol.">
        <title>The Chromatin Remodelling Protein CHD1 Contains a Previously Unrecognised C-Terminal Helical Domain.</title>
        <authorList>
            <person name="Mohanty B."/>
            <person name="Helder S."/>
            <person name="Silva A.P."/>
            <person name="Mackay J.P."/>
            <person name="Ryan D.P."/>
        </authorList>
    </citation>
    <scope>DOMAIN</scope>
    <scope>DNA-BINDING</scope>
</reference>
<reference key="5">
    <citation type="journal article" date="2021" name="Mol. Biol. Rep.">
        <title>Expression profile analysis of a new testis-specifically expressed gene C17ORF64 and its association with cell apoptosis in MCF-7 cells.</title>
        <authorList>
            <person name="Dai Y."/>
            <person name="Nie J."/>
            <person name="Luo Z."/>
            <person name="Nie D."/>
        </authorList>
    </citation>
    <scope>TISSUE SPECIFICITY</scope>
    <scope>SUBCELLULAR LOCATION</scope>
    <scope>FUNCTION</scope>
</reference>
<feature type="chain" id="PRO_0000287175" description="CHD1 helical C-terminal domain containing protein 1">
    <location>
        <begin position="1"/>
        <end position="236"/>
    </location>
</feature>
<feature type="region of interest" description="Disordered" evidence="2">
    <location>
        <begin position="1"/>
        <end position="29"/>
    </location>
</feature>
<feature type="region of interest" description="CHD1 helical C-terminal domain (CHCT)" evidence="1">
    <location>
        <begin position="44"/>
        <end position="145"/>
    </location>
</feature>
<feature type="region of interest" description="Disordered" evidence="2">
    <location>
        <begin position="197"/>
        <end position="236"/>
    </location>
</feature>
<feature type="compositionally biased region" description="Basic and acidic residues" evidence="2">
    <location>
        <begin position="198"/>
        <end position="212"/>
    </location>
</feature>
<feature type="compositionally biased region" description="Basic residues" evidence="2">
    <location>
        <begin position="214"/>
        <end position="226"/>
    </location>
</feature>
<feature type="compositionally biased region" description="Basic and acidic residues" evidence="2">
    <location>
        <begin position="227"/>
        <end position="236"/>
    </location>
</feature>
<feature type="splice variant" id="VSP_039026" description="In isoform 2." evidence="5">
    <location>
        <begin position="1"/>
        <end position="110"/>
    </location>
</feature>
<feature type="sequence conflict" description="In Ref. 1; BAB24934." evidence="6" ref="1">
    <original>L</original>
    <variation>M</variation>
    <location>
        <position position="197"/>
    </location>
</feature>
<dbReference type="EMBL" id="AK007281">
    <property type="protein sequence ID" value="BAB24934.1"/>
    <property type="molecule type" value="mRNA"/>
</dbReference>
<dbReference type="EMBL" id="AL596183">
    <property type="status" value="NOT_ANNOTATED_CDS"/>
    <property type="molecule type" value="Genomic_DNA"/>
</dbReference>
<dbReference type="EMBL" id="BC048674">
    <property type="protein sequence ID" value="AAH48674.1"/>
    <property type="status" value="ALT_INIT"/>
    <property type="molecule type" value="mRNA"/>
</dbReference>
<dbReference type="CCDS" id="CCDS48872.1">
    <molecule id="Q9D979-1"/>
</dbReference>
<dbReference type="RefSeq" id="NP_082865.1">
    <molecule id="Q9D979-1"/>
    <property type="nucleotide sequence ID" value="NM_028589.1"/>
</dbReference>
<dbReference type="RefSeq" id="XP_006534407.1">
    <molecule id="Q9D979-2"/>
    <property type="nucleotide sequence ID" value="XM_006534344.5"/>
</dbReference>
<dbReference type="RefSeq" id="XP_030102236.1">
    <molecule id="Q9D979-2"/>
    <property type="nucleotide sequence ID" value="XM_030246376.2"/>
</dbReference>
<dbReference type="RefSeq" id="XP_036012918.1">
    <molecule id="Q9D979-2"/>
    <property type="nucleotide sequence ID" value="XM_036157025.1"/>
</dbReference>
<dbReference type="SMR" id="Q9D979"/>
<dbReference type="STRING" id="10090.ENSMUSP00000018623"/>
<dbReference type="PhosphoSitePlus" id="Q9D979"/>
<dbReference type="PaxDb" id="10090-ENSMUSP00000018623"/>
<dbReference type="Antibodypedia" id="45592">
    <property type="antibodies" value="83 antibodies from 16 providers"/>
</dbReference>
<dbReference type="Ensembl" id="ENSMUST00000018623.4">
    <molecule id="Q9D979-1"/>
    <property type="protein sequence ID" value="ENSMUSP00000018623.4"/>
    <property type="gene ID" value="ENSMUSG00000018479.13"/>
</dbReference>
<dbReference type="Ensembl" id="ENSMUST00000100681.8">
    <molecule id="Q9D979-2"/>
    <property type="protein sequence ID" value="ENSMUSP00000098248.2"/>
    <property type="gene ID" value="ENSMUSG00000018479.13"/>
</dbReference>
<dbReference type="GeneID" id="73634"/>
<dbReference type="KEGG" id="mmu:73634"/>
<dbReference type="UCSC" id="uc007kri.2">
    <molecule id="Q9D979-1"/>
    <property type="organism name" value="mouse"/>
</dbReference>
<dbReference type="AGR" id="MGI:1920884"/>
<dbReference type="CTD" id="124773"/>
<dbReference type="MGI" id="MGI:1920884">
    <property type="gene designation" value="Chct1"/>
</dbReference>
<dbReference type="VEuPathDB" id="HostDB:ENSMUSG00000018479"/>
<dbReference type="eggNOG" id="KOG0384">
    <property type="taxonomic scope" value="Eukaryota"/>
</dbReference>
<dbReference type="GeneTree" id="ENSGT00390000003769"/>
<dbReference type="HOGENOM" id="CLU_1980913_0_0_1"/>
<dbReference type="InParanoid" id="Q9D979"/>
<dbReference type="OMA" id="FLQHCCR"/>
<dbReference type="OrthoDB" id="9388842at2759"/>
<dbReference type="PhylomeDB" id="Q9D979"/>
<dbReference type="TreeFam" id="TF335849"/>
<dbReference type="BioGRID-ORCS" id="73634">
    <property type="hits" value="2 hits in 76 CRISPR screens"/>
</dbReference>
<dbReference type="PRO" id="PR:Q9D979"/>
<dbReference type="Proteomes" id="UP000000589">
    <property type="component" value="Chromosome 11"/>
</dbReference>
<dbReference type="RNAct" id="Q9D979">
    <property type="molecule type" value="protein"/>
</dbReference>
<dbReference type="Bgee" id="ENSMUSG00000018479">
    <property type="expression patterns" value="Expressed in spermatid and 19 other cell types or tissues"/>
</dbReference>
<dbReference type="GO" id="GO:0005737">
    <property type="term" value="C:cytoplasm"/>
    <property type="evidence" value="ECO:0007669"/>
    <property type="project" value="UniProtKB-SubCell"/>
</dbReference>
<dbReference type="GO" id="GO:0005634">
    <property type="term" value="C:nucleus"/>
    <property type="evidence" value="ECO:0000250"/>
    <property type="project" value="UniProtKB"/>
</dbReference>
<dbReference type="InterPro" id="IPR039880">
    <property type="entry name" value="CHCT1-like"/>
</dbReference>
<dbReference type="InterPro" id="IPR025260">
    <property type="entry name" value="CHD1-like_C"/>
</dbReference>
<dbReference type="PANTHER" id="PTHR21765:SF1">
    <property type="entry name" value="CHD1 HELICAL C-TERMINAL DOMAIN CONTAINING PROTEIN 1"/>
    <property type="match status" value="1"/>
</dbReference>
<dbReference type="PANTHER" id="PTHR21765">
    <property type="entry name" value="SIMILAR TO CHROMODOMAIN-HELICASE-DNA-BINDING PROTEIN 1 (CHD-1)"/>
    <property type="match status" value="1"/>
</dbReference>
<dbReference type="Pfam" id="PF13907">
    <property type="entry name" value="CHD1-like_C"/>
    <property type="match status" value="1"/>
</dbReference>
<dbReference type="SMART" id="SM01176">
    <property type="entry name" value="DUF4208"/>
    <property type="match status" value="1"/>
</dbReference>
<protein>
    <recommendedName>
        <fullName>CHD1 helical C-terminal domain containing protein 1</fullName>
    </recommendedName>
    <alternativeName>
        <fullName>Uncharacterized protein C17orf64 homolog</fullName>
    </alternativeName>
</protein>
<name>CHCT1_MOUSE</name>
<keyword id="KW-0025">Alternative splicing</keyword>
<keyword id="KW-0963">Cytoplasm</keyword>
<keyword id="KW-0539">Nucleus</keyword>
<keyword id="KW-1185">Reference proteome</keyword>
<gene>
    <name type="primary">Chct1</name>
</gene>